<feature type="chain" id="PRO_0000100055" description="Water stress-inducible protein Rab21">
    <location>
        <begin position="1"/>
        <end position="172"/>
    </location>
</feature>
<feature type="repeat" description="Type A">
    <location>
        <begin position="3"/>
        <end position="28"/>
    </location>
</feature>
<feature type="repeat" description="Type B">
    <location>
        <begin position="98"/>
        <end position="115"/>
    </location>
</feature>
<feature type="repeat" description="Type A">
    <location>
        <begin position="125"/>
        <end position="149"/>
    </location>
</feature>
<feature type="repeat" description="Type B">
    <location>
        <begin position="156"/>
        <end position="172"/>
    </location>
</feature>
<feature type="region of interest" description="Disordered" evidence="1">
    <location>
        <begin position="1"/>
        <end position="172"/>
    </location>
</feature>
<feature type="compositionally biased region" description="Gly residues" evidence="1">
    <location>
        <begin position="21"/>
        <end position="65"/>
    </location>
</feature>
<feature type="compositionally biased region" description="Gly residues" evidence="1">
    <location>
        <begin position="124"/>
        <end position="139"/>
    </location>
</feature>
<feature type="compositionally biased region" description="Low complexity" evidence="1">
    <location>
        <begin position="140"/>
        <end position="153"/>
    </location>
</feature>
<feature type="compositionally biased region" description="Basic and acidic residues" evidence="1">
    <location>
        <begin position="154"/>
        <end position="172"/>
    </location>
</feature>
<feature type="sequence conflict" description="In Ref. 6; AK121952." evidence="2" ref="6">
    <original>E</original>
    <variation>K</variation>
    <location>
        <position position="156"/>
    </location>
</feature>
<dbReference type="EMBL" id="AC145325">
    <property type="protein sequence ID" value="AAX96128.1"/>
    <property type="molecule type" value="Genomic_DNA"/>
</dbReference>
<dbReference type="EMBL" id="DP000010">
    <property type="protein sequence ID" value="ABA93494.1"/>
    <property type="molecule type" value="Genomic_DNA"/>
</dbReference>
<dbReference type="EMBL" id="AP008217">
    <property type="protein sequence ID" value="BAF28207.1"/>
    <property type="molecule type" value="Genomic_DNA"/>
</dbReference>
<dbReference type="EMBL" id="AP014967">
    <property type="protein sequence ID" value="BAT13917.1"/>
    <property type="molecule type" value="Genomic_DNA"/>
</dbReference>
<dbReference type="EMBL" id="CM000148">
    <property type="protein sequence ID" value="EAZ18263.1"/>
    <property type="molecule type" value="Genomic_DNA"/>
</dbReference>
<dbReference type="EMBL" id="AK121952">
    <property type="status" value="NOT_ANNOTATED_CDS"/>
    <property type="molecule type" value="mRNA"/>
</dbReference>
<dbReference type="RefSeq" id="XP_015617608.1">
    <property type="nucleotide sequence ID" value="XM_015762122.1"/>
</dbReference>
<dbReference type="FunCoup" id="Q2R4Z4">
    <property type="interactions" value="62"/>
</dbReference>
<dbReference type="STRING" id="39947.Q2R4Z4"/>
<dbReference type="PaxDb" id="39947-Q2R4Z4"/>
<dbReference type="EnsemblPlants" id="Os11t0454300-01">
    <property type="protein sequence ID" value="Os11t0454300-01"/>
    <property type="gene ID" value="Os11g0454300"/>
</dbReference>
<dbReference type="Gramene" id="Os11t0454300-01">
    <property type="protein sequence ID" value="Os11t0454300-01"/>
    <property type="gene ID" value="Os11g0454300"/>
</dbReference>
<dbReference type="KEGG" id="dosa:Os11g0454300"/>
<dbReference type="eggNOG" id="ENOG502S4VW">
    <property type="taxonomic scope" value="Eukaryota"/>
</dbReference>
<dbReference type="HOGENOM" id="CLU_060028_2_0_1"/>
<dbReference type="InParanoid" id="Q2R4Z4"/>
<dbReference type="OMA" id="TAYTEEH"/>
<dbReference type="Proteomes" id="UP000000763">
    <property type="component" value="Chromosome 11"/>
</dbReference>
<dbReference type="Proteomes" id="UP000007752">
    <property type="component" value="Chromosome 11"/>
</dbReference>
<dbReference type="Proteomes" id="UP000059680">
    <property type="component" value="Chromosome 11"/>
</dbReference>
<dbReference type="GO" id="GO:0009631">
    <property type="term" value="P:cold acclimation"/>
    <property type="evidence" value="ECO:0000318"/>
    <property type="project" value="GO_Central"/>
</dbReference>
<dbReference type="GO" id="GO:0009737">
    <property type="term" value="P:response to abscisic acid"/>
    <property type="evidence" value="ECO:0000318"/>
    <property type="project" value="GO_Central"/>
</dbReference>
<dbReference type="GO" id="GO:0009414">
    <property type="term" value="P:response to water deprivation"/>
    <property type="evidence" value="ECO:0000318"/>
    <property type="project" value="GO_Central"/>
</dbReference>
<dbReference type="InterPro" id="IPR000167">
    <property type="entry name" value="Dehydrin"/>
</dbReference>
<dbReference type="InterPro" id="IPR030513">
    <property type="entry name" value="Dehydrin_CS"/>
</dbReference>
<dbReference type="PANTHER" id="PTHR33346:SF37">
    <property type="entry name" value="DEHYDRIN RAB16D"/>
    <property type="match status" value="1"/>
</dbReference>
<dbReference type="PANTHER" id="PTHR33346">
    <property type="entry name" value="DEHYDRIN XERO 2-RELATED"/>
    <property type="match status" value="1"/>
</dbReference>
<dbReference type="Pfam" id="PF00257">
    <property type="entry name" value="Dehydrin"/>
    <property type="match status" value="1"/>
</dbReference>
<dbReference type="PROSITE" id="PS00315">
    <property type="entry name" value="DEHYDRIN_1"/>
    <property type="match status" value="1"/>
</dbReference>
<dbReference type="PROSITE" id="PS00823">
    <property type="entry name" value="DEHYDRIN_2"/>
    <property type="match status" value="2"/>
</dbReference>
<keyword id="KW-1185">Reference proteome</keyword>
<keyword id="KW-0677">Repeat</keyword>
<keyword id="KW-0346">Stress response</keyword>
<organism>
    <name type="scientific">Oryza sativa subsp. japonica</name>
    <name type="common">Rice</name>
    <dbReference type="NCBI Taxonomy" id="39947"/>
    <lineage>
        <taxon>Eukaryota</taxon>
        <taxon>Viridiplantae</taxon>
        <taxon>Streptophyta</taxon>
        <taxon>Embryophyta</taxon>
        <taxon>Tracheophyta</taxon>
        <taxon>Spermatophyta</taxon>
        <taxon>Magnoliopsida</taxon>
        <taxon>Liliopsida</taxon>
        <taxon>Poales</taxon>
        <taxon>Poaceae</taxon>
        <taxon>BOP clade</taxon>
        <taxon>Oryzoideae</taxon>
        <taxon>Oryzeae</taxon>
        <taxon>Oryzinae</taxon>
        <taxon>Oryza</taxon>
        <taxon>Oryza sativa</taxon>
    </lineage>
</organism>
<comment type="similarity">
    <text evidence="2">Belongs to the plant dehydrin family.</text>
</comment>
<sequence length="172" mass="17326">MEHQGQHGHVTSRVDEYGNPVGTGAGHGQMGTAGMGTHGTTGGMGTHGTTGGMGTHGTTGTGGGQFQPMREEHKTGGVLQRSGSSSSSSSEDDGMGGRRKKGIKEKIKEKLPGGNKGEQQHAMGGTGGAYGQQGHGTGMTTGTTGAHGTTTTDTGEKKGIMDKIKEKLPGQH</sequence>
<evidence type="ECO:0000256" key="1">
    <source>
        <dbReference type="SAM" id="MobiDB-lite"/>
    </source>
</evidence>
<evidence type="ECO:0000305" key="2"/>
<reference key="1">
    <citation type="journal article" date="2005" name="BMC Biol.">
        <title>The sequence of rice chromosomes 11 and 12, rich in disease resistance genes and recent gene duplications.</title>
        <authorList>
            <consortium name="The rice chromosomes 11 and 12 sequencing consortia"/>
        </authorList>
    </citation>
    <scope>NUCLEOTIDE SEQUENCE [LARGE SCALE GENOMIC DNA]</scope>
    <source>
        <strain>cv. Nipponbare</strain>
    </source>
</reference>
<reference key="2">
    <citation type="journal article" date="2005" name="Nature">
        <title>The map-based sequence of the rice genome.</title>
        <authorList>
            <consortium name="International rice genome sequencing project (IRGSP)"/>
        </authorList>
    </citation>
    <scope>NUCLEOTIDE SEQUENCE [LARGE SCALE GENOMIC DNA]</scope>
    <source>
        <strain>cv. Nipponbare</strain>
    </source>
</reference>
<reference key="3">
    <citation type="journal article" date="2008" name="Nucleic Acids Res.">
        <title>The rice annotation project database (RAP-DB): 2008 update.</title>
        <authorList>
            <consortium name="The rice annotation project (RAP)"/>
        </authorList>
    </citation>
    <scope>GENOME REANNOTATION</scope>
    <source>
        <strain>cv. Nipponbare</strain>
    </source>
</reference>
<reference key="4">
    <citation type="journal article" date="2013" name="Rice">
        <title>Improvement of the Oryza sativa Nipponbare reference genome using next generation sequence and optical map data.</title>
        <authorList>
            <person name="Kawahara Y."/>
            <person name="de la Bastide M."/>
            <person name="Hamilton J.P."/>
            <person name="Kanamori H."/>
            <person name="McCombie W.R."/>
            <person name="Ouyang S."/>
            <person name="Schwartz D.C."/>
            <person name="Tanaka T."/>
            <person name="Wu J."/>
            <person name="Zhou S."/>
            <person name="Childs K.L."/>
            <person name="Davidson R.M."/>
            <person name="Lin H."/>
            <person name="Quesada-Ocampo L."/>
            <person name="Vaillancourt B."/>
            <person name="Sakai H."/>
            <person name="Lee S.S."/>
            <person name="Kim J."/>
            <person name="Numa H."/>
            <person name="Itoh T."/>
            <person name="Buell C.R."/>
            <person name="Matsumoto T."/>
        </authorList>
    </citation>
    <scope>GENOME REANNOTATION</scope>
    <source>
        <strain>cv. Nipponbare</strain>
    </source>
</reference>
<reference key="5">
    <citation type="journal article" date="2005" name="PLoS Biol.">
        <title>The genomes of Oryza sativa: a history of duplications.</title>
        <authorList>
            <person name="Yu J."/>
            <person name="Wang J."/>
            <person name="Lin W."/>
            <person name="Li S."/>
            <person name="Li H."/>
            <person name="Zhou J."/>
            <person name="Ni P."/>
            <person name="Dong W."/>
            <person name="Hu S."/>
            <person name="Zeng C."/>
            <person name="Zhang J."/>
            <person name="Zhang Y."/>
            <person name="Li R."/>
            <person name="Xu Z."/>
            <person name="Li S."/>
            <person name="Li X."/>
            <person name="Zheng H."/>
            <person name="Cong L."/>
            <person name="Lin L."/>
            <person name="Yin J."/>
            <person name="Geng J."/>
            <person name="Li G."/>
            <person name="Shi J."/>
            <person name="Liu J."/>
            <person name="Lv H."/>
            <person name="Li J."/>
            <person name="Wang J."/>
            <person name="Deng Y."/>
            <person name="Ran L."/>
            <person name="Shi X."/>
            <person name="Wang X."/>
            <person name="Wu Q."/>
            <person name="Li C."/>
            <person name="Ren X."/>
            <person name="Wang J."/>
            <person name="Wang X."/>
            <person name="Li D."/>
            <person name="Liu D."/>
            <person name="Zhang X."/>
            <person name="Ji Z."/>
            <person name="Zhao W."/>
            <person name="Sun Y."/>
            <person name="Zhang Z."/>
            <person name="Bao J."/>
            <person name="Han Y."/>
            <person name="Dong L."/>
            <person name="Ji J."/>
            <person name="Chen P."/>
            <person name="Wu S."/>
            <person name="Liu J."/>
            <person name="Xiao Y."/>
            <person name="Bu D."/>
            <person name="Tan J."/>
            <person name="Yang L."/>
            <person name="Ye C."/>
            <person name="Zhang J."/>
            <person name="Xu J."/>
            <person name="Zhou Y."/>
            <person name="Yu Y."/>
            <person name="Zhang B."/>
            <person name="Zhuang S."/>
            <person name="Wei H."/>
            <person name="Liu B."/>
            <person name="Lei M."/>
            <person name="Yu H."/>
            <person name="Li Y."/>
            <person name="Xu H."/>
            <person name="Wei S."/>
            <person name="He X."/>
            <person name="Fang L."/>
            <person name="Zhang Z."/>
            <person name="Zhang Y."/>
            <person name="Huang X."/>
            <person name="Su Z."/>
            <person name="Tong W."/>
            <person name="Li J."/>
            <person name="Tong Z."/>
            <person name="Li S."/>
            <person name="Ye J."/>
            <person name="Wang L."/>
            <person name="Fang L."/>
            <person name="Lei T."/>
            <person name="Chen C.-S."/>
            <person name="Chen H.-C."/>
            <person name="Xu Z."/>
            <person name="Li H."/>
            <person name="Huang H."/>
            <person name="Zhang F."/>
            <person name="Xu H."/>
            <person name="Li N."/>
            <person name="Zhao C."/>
            <person name="Li S."/>
            <person name="Dong L."/>
            <person name="Huang Y."/>
            <person name="Li L."/>
            <person name="Xi Y."/>
            <person name="Qi Q."/>
            <person name="Li W."/>
            <person name="Zhang B."/>
            <person name="Hu W."/>
            <person name="Zhang Y."/>
            <person name="Tian X."/>
            <person name="Jiao Y."/>
            <person name="Liang X."/>
            <person name="Jin J."/>
            <person name="Gao L."/>
            <person name="Zheng W."/>
            <person name="Hao B."/>
            <person name="Liu S.-M."/>
            <person name="Wang W."/>
            <person name="Yuan L."/>
            <person name="Cao M."/>
            <person name="McDermott J."/>
            <person name="Samudrala R."/>
            <person name="Wang J."/>
            <person name="Wong G.K.-S."/>
            <person name="Yang H."/>
        </authorList>
    </citation>
    <scope>NUCLEOTIDE SEQUENCE [LARGE SCALE GENOMIC DNA]</scope>
    <source>
        <strain>cv. Nipponbare</strain>
    </source>
</reference>
<reference key="6">
    <citation type="journal article" date="2003" name="Science">
        <title>Collection, mapping, and annotation of over 28,000 cDNA clones from japonica rice.</title>
        <authorList>
            <consortium name="The rice full-length cDNA consortium"/>
        </authorList>
    </citation>
    <scope>NUCLEOTIDE SEQUENCE [LARGE SCALE MRNA]</scope>
    <source>
        <strain>cv. Nipponbare</strain>
    </source>
</reference>
<gene>
    <name type="primary">RAB21</name>
    <name type="ordered locus">Os11g0454300</name>
    <name type="ordered locus">LOC_Os11g26790</name>
    <name type="ORF">OsJ_032472</name>
</gene>
<proteinExistence type="evidence at transcript level"/>
<name>DHR21_ORYSJ</name>
<accession>Q2R4Z4</accession>
<accession>A0A0P0Y1X6</accession>
<accession>P12253</accession>
<accession>Q53L95</accession>
<protein>
    <recommendedName>
        <fullName>Water stress-inducible protein Rab21</fullName>
    </recommendedName>
</protein>